<name>GUAC_ECOLI</name>
<protein>
    <recommendedName>
        <fullName>GMP reductase</fullName>
        <ecNumber>1.7.1.7</ecNumber>
    </recommendedName>
    <alternativeName>
        <fullName>Guanosine 5'-monophosphate oxidoreductase</fullName>
        <shortName>Guanosine monophosphate reductase</shortName>
    </alternativeName>
</protein>
<evidence type="ECO:0000250" key="1"/>
<evidence type="ECO:0000305" key="2"/>
<comment type="function">
    <text>Catalyzes the irreversible NADPH-dependent deamination of GMP to IMP. It functions in the conversion of nucleobase, nucleoside and nucleotide derivatives of G to A nucleotides, and in maintaining the intracellular balance of A and G nucleotides.</text>
</comment>
<comment type="catalytic activity">
    <reaction>
        <text>IMP + NH4(+) + NADP(+) = GMP + NADPH + 2 H(+)</text>
        <dbReference type="Rhea" id="RHEA:17185"/>
        <dbReference type="ChEBI" id="CHEBI:15378"/>
        <dbReference type="ChEBI" id="CHEBI:28938"/>
        <dbReference type="ChEBI" id="CHEBI:57783"/>
        <dbReference type="ChEBI" id="CHEBI:58053"/>
        <dbReference type="ChEBI" id="CHEBI:58115"/>
        <dbReference type="ChEBI" id="CHEBI:58349"/>
        <dbReference type="EC" id="1.7.1.7"/>
    </reaction>
</comment>
<comment type="subunit">
    <text>Homotetramer.</text>
</comment>
<comment type="interaction">
    <interactant intactId="EBI-544491">
        <id>P60560</id>
    </interactant>
    <interactant intactId="EBI-544485">
        <id>P76015</id>
        <label>dhaK</label>
    </interactant>
    <organismsDiffer>false</organismsDiffer>
    <experiments>2</experiments>
</comment>
<comment type="interaction">
    <interactant intactId="EBI-544491">
        <id>P60560</id>
    </interactant>
    <interactant intactId="EBI-542419">
        <id>P15288</id>
        <label>pepD</label>
    </interactant>
    <organismsDiffer>false</organismsDiffer>
    <experiments>3</experiments>
</comment>
<comment type="interaction">
    <interactant intactId="EBI-544491">
        <id>P60560</id>
    </interactant>
    <interactant intactId="EBI-554801">
        <id>P15034</id>
        <label>pepP</label>
    </interactant>
    <organismsDiffer>false</organismsDiffer>
    <experiments>3</experiments>
</comment>
<comment type="similarity">
    <text evidence="2">Belongs to the IMPDH/GMPR family. GuaC type 1 subfamily.</text>
</comment>
<keyword id="KW-0903">Direct protein sequencing</keyword>
<keyword id="KW-0479">Metal-binding</keyword>
<keyword id="KW-0521">NADP</keyword>
<keyword id="KW-0560">Oxidoreductase</keyword>
<keyword id="KW-0630">Potassium</keyword>
<keyword id="KW-1185">Reference proteome</keyword>
<dbReference type="EC" id="1.7.1.7"/>
<dbReference type="EMBL" id="X07917">
    <property type="protein sequence ID" value="CAA30751.1"/>
    <property type="molecule type" value="Genomic_DNA"/>
</dbReference>
<dbReference type="EMBL" id="U00096">
    <property type="protein sequence ID" value="AAC73215.1"/>
    <property type="molecule type" value="Genomic_DNA"/>
</dbReference>
<dbReference type="EMBL" id="AP009048">
    <property type="protein sequence ID" value="BAB96673.2"/>
    <property type="molecule type" value="Genomic_DNA"/>
</dbReference>
<dbReference type="EMBL" id="L28105">
    <property type="protein sequence ID" value="AAC36926.1"/>
    <property type="molecule type" value="Genomic_DNA"/>
</dbReference>
<dbReference type="PIR" id="H64732">
    <property type="entry name" value="H64732"/>
</dbReference>
<dbReference type="RefSeq" id="NP_414646.1">
    <property type="nucleotide sequence ID" value="NC_000913.3"/>
</dbReference>
<dbReference type="RefSeq" id="WP_001217338.1">
    <property type="nucleotide sequence ID" value="NZ_STEB01000010.1"/>
</dbReference>
<dbReference type="SMR" id="P60560"/>
<dbReference type="BioGRID" id="4261108">
    <property type="interactions" value="15"/>
</dbReference>
<dbReference type="BioGRID" id="853234">
    <property type="interactions" value="1"/>
</dbReference>
<dbReference type="DIP" id="DIP-47861N"/>
<dbReference type="FunCoup" id="P60560">
    <property type="interactions" value="362"/>
</dbReference>
<dbReference type="IntAct" id="P60560">
    <property type="interactions" value="6"/>
</dbReference>
<dbReference type="STRING" id="511145.b0104"/>
<dbReference type="jPOST" id="P60560"/>
<dbReference type="PaxDb" id="511145-b0104"/>
<dbReference type="EnsemblBacteria" id="AAC73215">
    <property type="protein sequence ID" value="AAC73215"/>
    <property type="gene ID" value="b0104"/>
</dbReference>
<dbReference type="GeneID" id="93777331"/>
<dbReference type="GeneID" id="948986"/>
<dbReference type="KEGG" id="ecj:JW0101"/>
<dbReference type="KEGG" id="eco:b0104"/>
<dbReference type="KEGG" id="ecoc:C3026_00425"/>
<dbReference type="PATRIC" id="fig|1411691.4.peg.2177"/>
<dbReference type="EchoBASE" id="EB0417"/>
<dbReference type="eggNOG" id="COG0516">
    <property type="taxonomic scope" value="Bacteria"/>
</dbReference>
<dbReference type="HOGENOM" id="CLU_022552_5_3_6"/>
<dbReference type="InParanoid" id="P60560"/>
<dbReference type="OMA" id="AYKEYFG"/>
<dbReference type="OrthoDB" id="9805398at2"/>
<dbReference type="PhylomeDB" id="P60560"/>
<dbReference type="BioCyc" id="EcoCyc:GMP-REDUCT-MONOMER"/>
<dbReference type="BioCyc" id="MetaCyc:GMP-REDUCT-MONOMER"/>
<dbReference type="PRO" id="PR:P60560"/>
<dbReference type="Proteomes" id="UP000000625">
    <property type="component" value="Chromosome"/>
</dbReference>
<dbReference type="GO" id="GO:0005737">
    <property type="term" value="C:cytoplasm"/>
    <property type="evidence" value="ECO:0000305"/>
    <property type="project" value="EcoCyc"/>
</dbReference>
<dbReference type="GO" id="GO:0005829">
    <property type="term" value="C:cytosol"/>
    <property type="evidence" value="ECO:0000314"/>
    <property type="project" value="EcoCyc"/>
</dbReference>
<dbReference type="GO" id="GO:1902560">
    <property type="term" value="C:GMP reductase complex"/>
    <property type="evidence" value="ECO:0007669"/>
    <property type="project" value="InterPro"/>
</dbReference>
<dbReference type="GO" id="GO:0003920">
    <property type="term" value="F:GMP reductase activity"/>
    <property type="evidence" value="ECO:0000314"/>
    <property type="project" value="EcoCyc"/>
</dbReference>
<dbReference type="GO" id="GO:0042802">
    <property type="term" value="F:identical protein binding"/>
    <property type="evidence" value="ECO:0000314"/>
    <property type="project" value="EcoCyc"/>
</dbReference>
<dbReference type="GO" id="GO:0046872">
    <property type="term" value="F:metal ion binding"/>
    <property type="evidence" value="ECO:0007669"/>
    <property type="project" value="UniProtKB-KW"/>
</dbReference>
<dbReference type="GO" id="GO:0032264">
    <property type="term" value="P:IMP salvage"/>
    <property type="evidence" value="ECO:0000314"/>
    <property type="project" value="MGI"/>
</dbReference>
<dbReference type="GO" id="GO:0015951">
    <property type="term" value="P:purine ribonucleotide interconversion"/>
    <property type="evidence" value="ECO:0000314"/>
    <property type="project" value="EcoCyc"/>
</dbReference>
<dbReference type="CDD" id="cd00381">
    <property type="entry name" value="IMPDH"/>
    <property type="match status" value="1"/>
</dbReference>
<dbReference type="FunFam" id="3.20.20.70:FF:000012">
    <property type="entry name" value="GMP reductase"/>
    <property type="match status" value="1"/>
</dbReference>
<dbReference type="Gene3D" id="3.20.20.70">
    <property type="entry name" value="Aldolase class I"/>
    <property type="match status" value="1"/>
</dbReference>
<dbReference type="HAMAP" id="MF_00596">
    <property type="entry name" value="GMP_reduct_type1"/>
    <property type="match status" value="1"/>
</dbReference>
<dbReference type="InterPro" id="IPR013785">
    <property type="entry name" value="Aldolase_TIM"/>
</dbReference>
<dbReference type="InterPro" id="IPR050139">
    <property type="entry name" value="GMP_reductase"/>
</dbReference>
<dbReference type="InterPro" id="IPR005993">
    <property type="entry name" value="GMPR"/>
</dbReference>
<dbReference type="InterPro" id="IPR015875">
    <property type="entry name" value="IMP_DH/GMP_Rdtase_CS"/>
</dbReference>
<dbReference type="InterPro" id="IPR001093">
    <property type="entry name" value="IMP_DH_GMPRt"/>
</dbReference>
<dbReference type="NCBIfam" id="TIGR01305">
    <property type="entry name" value="GMP_reduct_1"/>
    <property type="match status" value="1"/>
</dbReference>
<dbReference type="NCBIfam" id="NF003470">
    <property type="entry name" value="PRK05096.1"/>
    <property type="match status" value="1"/>
</dbReference>
<dbReference type="PANTHER" id="PTHR43170">
    <property type="entry name" value="GMP REDUCTASE"/>
    <property type="match status" value="1"/>
</dbReference>
<dbReference type="PANTHER" id="PTHR43170:SF5">
    <property type="entry name" value="GMP REDUCTASE"/>
    <property type="match status" value="1"/>
</dbReference>
<dbReference type="Pfam" id="PF00478">
    <property type="entry name" value="IMPDH"/>
    <property type="match status" value="1"/>
</dbReference>
<dbReference type="PIRSF" id="PIRSF000235">
    <property type="entry name" value="GMP_reductase"/>
    <property type="match status" value="1"/>
</dbReference>
<dbReference type="SMART" id="SM01240">
    <property type="entry name" value="IMPDH"/>
    <property type="match status" value="1"/>
</dbReference>
<dbReference type="SUPFAM" id="SSF51412">
    <property type="entry name" value="Inosine monophosphate dehydrogenase (IMPDH)"/>
    <property type="match status" value="1"/>
</dbReference>
<dbReference type="PROSITE" id="PS00487">
    <property type="entry name" value="IMP_DH_GMP_RED"/>
    <property type="match status" value="1"/>
</dbReference>
<proteinExistence type="evidence at protein level"/>
<accession>P60560</accession>
<accession>P15344</accession>
<accession>P78048</accession>
<feature type="chain" id="PRO_0000093735" description="GMP reductase">
    <location>
        <begin position="1"/>
        <end position="347"/>
    </location>
</feature>
<feature type="active site" description="Thioimidate intermediate" evidence="1">
    <location>
        <position position="186"/>
    </location>
</feature>
<feature type="binding site" evidence="1">
    <location>
        <begin position="108"/>
        <end position="131"/>
    </location>
    <ligand>
        <name>NADP(+)</name>
        <dbReference type="ChEBI" id="CHEBI:58349"/>
    </ligand>
</feature>
<feature type="binding site" evidence="1">
    <location>
        <position position="181"/>
    </location>
    <ligand>
        <name>K(+)</name>
        <dbReference type="ChEBI" id="CHEBI:29103"/>
    </ligand>
</feature>
<feature type="binding site" evidence="1">
    <location>
        <position position="183"/>
    </location>
    <ligand>
        <name>K(+)</name>
        <dbReference type="ChEBI" id="CHEBI:29103"/>
    </ligand>
</feature>
<feature type="binding site" evidence="1">
    <location>
        <begin position="216"/>
        <end position="239"/>
    </location>
    <ligand>
        <name>NADP(+)</name>
        <dbReference type="ChEBI" id="CHEBI:58349"/>
    </ligand>
</feature>
<feature type="sequence conflict" description="In Ref. 1 and 2." evidence="2" ref="1 2">
    <original>GGG</original>
    <variation>AR</variation>
    <location>
        <begin position="233"/>
        <end position="235"/>
    </location>
</feature>
<sequence>MRIEEDLKLGFKDVLIRPKRSTLKSRSDVELERQFTFKHSGQSWSGVPIIAANMDTVGTFSMASALASFDILTAVHKHYSVEEWQAFINNSSADVLKHVMVSTGTSDADFEKTKQILDLNPALNFVCIDVANGYSEHFVQFVAKAREAWPTKTICAGNVVTGEMCEELILSGADIVKVGIGPGSVCTTRVKTGVGYPQLSAVIECADAAHGLGGMIVSDGGCTTPGDVAKAFGGGADFVMLGGMLAGHEESGGRIVEENGEKFMLFYGMSSESAMKRHVGGVAEYRAAEGKTVKLPLRGPVENTARDILGGLRSACTYVGASRLKELTKRTTFIRVQEQENRIFNNL</sequence>
<organism>
    <name type="scientific">Escherichia coli (strain K12)</name>
    <dbReference type="NCBI Taxonomy" id="83333"/>
    <lineage>
        <taxon>Bacteria</taxon>
        <taxon>Pseudomonadati</taxon>
        <taxon>Pseudomonadota</taxon>
        <taxon>Gammaproteobacteria</taxon>
        <taxon>Enterobacterales</taxon>
        <taxon>Enterobacteriaceae</taxon>
        <taxon>Escherichia</taxon>
    </lineage>
</organism>
<gene>
    <name type="primary">guaC</name>
    <name type="ordered locus">b0104</name>
    <name type="ordered locus">JW0101</name>
</gene>
<reference key="1">
    <citation type="journal article" date="1988" name="Biochem. J.">
        <title>Nucleotide sequence of the gene encoding the GMP reductase of Escherichia coli K12.</title>
        <authorList>
            <person name="Andrews S.C."/>
            <person name="Guest J.R."/>
        </authorList>
    </citation>
    <scope>NUCLEOTIDE SEQUENCE [GENOMIC DNA]</scope>
    <source>
        <strain>K12</strain>
    </source>
</reference>
<reference key="2">
    <citation type="journal article" date="1994" name="Nucleic Acids Res.">
        <title>Systematic sequencing of the Escherichia coli genome: analysis of the 2.4-4.1 min (110,917-193,643 bp) region.</title>
        <authorList>
            <person name="Fujita N."/>
            <person name="Mori H."/>
            <person name="Yura T."/>
            <person name="Ishihama A."/>
        </authorList>
    </citation>
    <scope>NUCLEOTIDE SEQUENCE [LARGE SCALE GENOMIC DNA]</scope>
    <source>
        <strain>K12 / W3110 / ATCC 27325 / DSM 5911</strain>
    </source>
</reference>
<reference key="3">
    <citation type="journal article" date="1997" name="Science">
        <title>The complete genome sequence of Escherichia coli K-12.</title>
        <authorList>
            <person name="Blattner F.R."/>
            <person name="Plunkett G. III"/>
            <person name="Bloch C.A."/>
            <person name="Perna N.T."/>
            <person name="Burland V."/>
            <person name="Riley M."/>
            <person name="Collado-Vides J."/>
            <person name="Glasner J.D."/>
            <person name="Rode C.K."/>
            <person name="Mayhew G.F."/>
            <person name="Gregor J."/>
            <person name="Davis N.W."/>
            <person name="Kirkpatrick H.A."/>
            <person name="Goeden M.A."/>
            <person name="Rose D.J."/>
            <person name="Mau B."/>
            <person name="Shao Y."/>
        </authorList>
    </citation>
    <scope>NUCLEOTIDE SEQUENCE [LARGE SCALE GENOMIC DNA]</scope>
    <source>
        <strain>K12 / MG1655 / ATCC 47076</strain>
    </source>
</reference>
<reference key="4">
    <citation type="journal article" date="2006" name="Mol. Syst. Biol.">
        <title>Highly accurate genome sequences of Escherichia coli K-12 strains MG1655 and W3110.</title>
        <authorList>
            <person name="Hayashi K."/>
            <person name="Morooka N."/>
            <person name="Yamamoto Y."/>
            <person name="Fujita K."/>
            <person name="Isono K."/>
            <person name="Choi S."/>
            <person name="Ohtsubo E."/>
            <person name="Baba T."/>
            <person name="Wanner B.L."/>
            <person name="Mori H."/>
            <person name="Horiuchi T."/>
        </authorList>
    </citation>
    <scope>NUCLEOTIDE SEQUENCE [LARGE SCALE GENOMIC DNA]</scope>
    <scope>SEQUENCE REVISION TO 233-235</scope>
    <source>
        <strain>K12 / W3110 / ATCC 27325 / DSM 5911</strain>
    </source>
</reference>
<reference key="5">
    <citation type="journal article" date="1994" name="Gene">
        <title>Escherichia coli contains a set of genes homologous to those involved in protein secretion, DNA uptake and the assembly of type-4 fimbriae in other bacteria.</title>
        <authorList>
            <person name="Whitchurch C.B."/>
            <person name="Mattick J.S."/>
        </authorList>
    </citation>
    <scope>NUCLEOTIDE SEQUENCE [GENOMIC DNA] OF 244-347</scope>
    <source>
        <strain>K12</strain>
    </source>
</reference>
<reference key="6">
    <citation type="journal article" date="1997" name="Electrophoresis">
        <title>Comparing the predicted and observed properties of proteins encoded in the genome of Escherichia coli K-12.</title>
        <authorList>
            <person name="Link A.J."/>
            <person name="Robison K."/>
            <person name="Church G.M."/>
        </authorList>
    </citation>
    <scope>PROTEIN SEQUENCE OF 1-12</scope>
    <source>
        <strain>K12 / EMG2</strain>
    </source>
</reference>
<reference key="7">
    <citation type="journal article" date="1997" name="Electrophoresis">
        <title>Escherichia coli proteome analysis using the gene-protein database.</title>
        <authorList>
            <person name="VanBogelen R.A."/>
            <person name="Abshire K.Z."/>
            <person name="Moldover B."/>
            <person name="Olson E.R."/>
            <person name="Neidhardt F.C."/>
        </authorList>
    </citation>
    <scope>IDENTIFICATION BY 2D-GEL</scope>
</reference>